<keyword id="KW-0066">ATP synthesis</keyword>
<keyword id="KW-1003">Cell membrane</keyword>
<keyword id="KW-0375">Hydrogen ion transport</keyword>
<keyword id="KW-0406">Ion transport</keyword>
<keyword id="KW-0472">Membrane</keyword>
<keyword id="KW-0813">Transport</keyword>
<reference key="1">
    <citation type="journal article" date="2009" name="ISME J.">
        <title>The genome sequence of the psychrophilic archaeon, Methanococcoides burtonii: the role of genome evolution in cold adaptation.</title>
        <authorList>
            <person name="Allen M.A."/>
            <person name="Lauro F.M."/>
            <person name="Williams T.J."/>
            <person name="Burg D."/>
            <person name="Siddiqui K.S."/>
            <person name="De Francisci D."/>
            <person name="Chong K.W."/>
            <person name="Pilak O."/>
            <person name="Chew H.H."/>
            <person name="De Maere M.Z."/>
            <person name="Ting L."/>
            <person name="Katrib M."/>
            <person name="Ng C."/>
            <person name="Sowers K.R."/>
            <person name="Galperin M.Y."/>
            <person name="Anderson I.J."/>
            <person name="Ivanova N."/>
            <person name="Dalin E."/>
            <person name="Martinez M."/>
            <person name="Lapidus A."/>
            <person name="Hauser L."/>
            <person name="Land M."/>
            <person name="Thomas T."/>
            <person name="Cavicchioli R."/>
        </authorList>
    </citation>
    <scope>NUCLEOTIDE SEQUENCE [LARGE SCALE GENOMIC DNA]</scope>
    <source>
        <strain>DSM 6242 / NBRC 107633 / OCM 468 / ACE-M</strain>
    </source>
</reference>
<sequence length="99" mass="10855">MELAVVGSSEFVTGFRLAGIKKIYEAKSDELESVVTKVLKDSDVGIFVIHEDDFNKLPEILRDTLSESVDPTVVTLGGTGESSNLREKIKQSVGVDLWK</sequence>
<gene>
    <name evidence="1" type="primary">atpF</name>
    <name type="ordered locus">Mbur_1242</name>
</gene>
<organism>
    <name type="scientific">Methanococcoides burtonii (strain DSM 6242 / NBRC 107633 / OCM 468 / ACE-M)</name>
    <dbReference type="NCBI Taxonomy" id="259564"/>
    <lineage>
        <taxon>Archaea</taxon>
        <taxon>Methanobacteriati</taxon>
        <taxon>Methanobacteriota</taxon>
        <taxon>Stenosarchaea group</taxon>
        <taxon>Methanomicrobia</taxon>
        <taxon>Methanosarcinales</taxon>
        <taxon>Methanosarcinaceae</taxon>
        <taxon>Methanococcoides</taxon>
    </lineage>
</organism>
<accession>Q12WL2</accession>
<protein>
    <recommendedName>
        <fullName evidence="1">A-type ATP synthase subunit F</fullName>
    </recommendedName>
</protein>
<comment type="function">
    <text evidence="1">Component of the A-type ATP synthase that produces ATP from ADP in the presence of a proton gradient across the membrane.</text>
</comment>
<comment type="subunit">
    <text evidence="1">Has multiple subunits with at least A(3), B(3), C, D, E, F, H, I and proteolipid K(x).</text>
</comment>
<comment type="subcellular location">
    <subcellularLocation>
        <location evidence="1">Cell membrane</location>
        <topology evidence="1">Peripheral membrane protein</topology>
    </subcellularLocation>
</comment>
<comment type="similarity">
    <text evidence="1">Belongs to the V-ATPase F subunit family.</text>
</comment>
<name>AATF_METBU</name>
<evidence type="ECO:0000255" key="1">
    <source>
        <dbReference type="HAMAP-Rule" id="MF_00312"/>
    </source>
</evidence>
<proteinExistence type="inferred from homology"/>
<dbReference type="EMBL" id="CP000300">
    <property type="protein sequence ID" value="ABE52164.1"/>
    <property type="molecule type" value="Genomic_DNA"/>
</dbReference>
<dbReference type="RefSeq" id="WP_011499310.1">
    <property type="nucleotide sequence ID" value="NC_007955.1"/>
</dbReference>
<dbReference type="SMR" id="Q12WL2"/>
<dbReference type="STRING" id="259564.Mbur_1242"/>
<dbReference type="GeneID" id="3998566"/>
<dbReference type="KEGG" id="mbu:Mbur_1242"/>
<dbReference type="HOGENOM" id="CLU_135754_2_2_2"/>
<dbReference type="OrthoDB" id="24971at2157"/>
<dbReference type="Proteomes" id="UP000001979">
    <property type="component" value="Chromosome"/>
</dbReference>
<dbReference type="GO" id="GO:0005886">
    <property type="term" value="C:plasma membrane"/>
    <property type="evidence" value="ECO:0007669"/>
    <property type="project" value="UniProtKB-SubCell"/>
</dbReference>
<dbReference type="GO" id="GO:0005524">
    <property type="term" value="F:ATP binding"/>
    <property type="evidence" value="ECO:0007669"/>
    <property type="project" value="UniProtKB-UniRule"/>
</dbReference>
<dbReference type="GO" id="GO:0046933">
    <property type="term" value="F:proton-transporting ATP synthase activity, rotational mechanism"/>
    <property type="evidence" value="ECO:0007669"/>
    <property type="project" value="UniProtKB-UniRule"/>
</dbReference>
<dbReference type="GO" id="GO:0046961">
    <property type="term" value="F:proton-transporting ATPase activity, rotational mechanism"/>
    <property type="evidence" value="ECO:0007669"/>
    <property type="project" value="InterPro"/>
</dbReference>
<dbReference type="GO" id="GO:0042777">
    <property type="term" value="P:proton motive force-driven plasma membrane ATP synthesis"/>
    <property type="evidence" value="ECO:0007669"/>
    <property type="project" value="UniProtKB-UniRule"/>
</dbReference>
<dbReference type="Gene3D" id="3.40.50.10580">
    <property type="entry name" value="ATPase, V1 complex, subunit F"/>
    <property type="match status" value="1"/>
</dbReference>
<dbReference type="HAMAP" id="MF_00312">
    <property type="entry name" value="ATP_synth_F_arch"/>
    <property type="match status" value="1"/>
</dbReference>
<dbReference type="InterPro" id="IPR008218">
    <property type="entry name" value="ATPase_V1-cplx_f_g_su"/>
</dbReference>
<dbReference type="InterPro" id="IPR022944">
    <property type="entry name" value="ATPase_V1-cplx_fsu_bac/arc"/>
</dbReference>
<dbReference type="InterPro" id="IPR036906">
    <property type="entry name" value="ATPase_V1_fsu_sf"/>
</dbReference>
<dbReference type="NCBIfam" id="NF002577">
    <property type="entry name" value="PRK02228.1"/>
    <property type="match status" value="1"/>
</dbReference>
<dbReference type="Pfam" id="PF01990">
    <property type="entry name" value="ATP-synt_F"/>
    <property type="match status" value="1"/>
</dbReference>
<dbReference type="SUPFAM" id="SSF159468">
    <property type="entry name" value="AtpF-like"/>
    <property type="match status" value="1"/>
</dbReference>
<feature type="chain" id="PRO_1000059428" description="A-type ATP synthase subunit F">
    <location>
        <begin position="1"/>
        <end position="99"/>
    </location>
</feature>